<sequence length="389" mass="43294">MSIKKDYDVIVVGAGSMGMAAGYYLSKQGVKTLLVDSFHPPHTNGSHHGDTRIIRHAYGEGREYVPFALRAQELWYELEKETHHKIFTKTGVLVFGPKGEAPFVAETMEAAKEHSLDVDLLEGSEINKRWPGVTVPENYNAIFEKNSGVLFSENCIRAYRELAEANGAKVLTYTPVEDFEIAEDFVKIQTAYGSFTASKLIVSMGAWNSKLLSKLNIEIPLQPYRQVVGFFECDEKKYSNTHGYPAFMVEVPTGIYYGFPSFGGCGLKIGYHTYGQKIDPDTINREFGIYPEDEGNIRKFLETYMPGATGELKSGDVCMYTKTPDEHFVIDLHPQFSNVAIAAGFSGHGFKFSSVVGETLSQLAVTGKTEHDISIFSINRPALKQKETI</sequence>
<comment type="function">
    <text>Catalyzes the oxidative demethylation of sarcosine.</text>
</comment>
<comment type="catalytic activity">
    <reaction>
        <text>sarcosine + O2 + H2O = formaldehyde + glycine + H2O2</text>
        <dbReference type="Rhea" id="RHEA:13313"/>
        <dbReference type="ChEBI" id="CHEBI:15377"/>
        <dbReference type="ChEBI" id="CHEBI:15379"/>
        <dbReference type="ChEBI" id="CHEBI:16240"/>
        <dbReference type="ChEBI" id="CHEBI:16842"/>
        <dbReference type="ChEBI" id="CHEBI:57305"/>
        <dbReference type="ChEBI" id="CHEBI:57433"/>
        <dbReference type="EC" id="1.5.3.1"/>
    </reaction>
</comment>
<comment type="cofactor">
    <cofactor>
        <name>FAD</name>
        <dbReference type="ChEBI" id="CHEBI:57692"/>
    </cofactor>
    <text>Binds 1 FAD per subunit.</text>
</comment>
<comment type="subunit">
    <text>Monomer.</text>
</comment>
<comment type="subcellular location">
    <subcellularLocation>
        <location>Cytoplasm</location>
    </subcellularLocation>
</comment>
<comment type="miscellaneous">
    <text>Decreases in function by replacement in the G-X-G-X-X-G motif are suppressed by chloride or bromide ion.</text>
</comment>
<comment type="similarity">
    <text evidence="6">Belongs to the MSOX/MTOX family. MSOX subfamily.</text>
</comment>
<gene>
    <name type="primary">soxA</name>
</gene>
<protein>
    <recommendedName>
        <fullName>Monomeric sarcosine oxidase</fullName>
        <shortName>MSOX</shortName>
        <ecNumber>1.5.3.1</ecNumber>
    </recommendedName>
</protein>
<reference key="1">
    <citation type="journal article" date="1993" name="J. Ferment. Bioeng.">
        <title>Cloning and sequencing of the sarcosine oxidase gene from Arthrobacter sp. TE1826.</title>
        <authorList>
            <person name="Nishiya Y."/>
            <person name="Imanaka T."/>
        </authorList>
    </citation>
    <scope>NUCLEOTIDE SEQUENCE [GENOMIC DNA]</scope>
    <scope>PROTEIN SEQUENCE OF 2-6</scope>
</reference>
<reference key="2">
    <citation type="journal article" date="1998" name="Mol. Gen. Genet.">
        <title>Gene cluster for creatinine degradation in Arthrobacter sp. TE1826.</title>
        <authorList>
            <person name="Nishiya Y."/>
            <person name="Toda A."/>
            <person name="Imanaka T."/>
        </authorList>
    </citation>
    <scope>NUCLEOTIDE SEQUENCE [GENOMIC DNA]</scope>
</reference>
<reference key="3">
    <citation type="journal article" date="1995" name="Appl. Environ. Microbiol.">
        <title>Active site analysis and stabilization of sarcosine oxidase by the substitution of cysteine residues.</title>
        <authorList>
            <person name="Nishiya Y."/>
            <person name="Zuihara S."/>
            <person name="Imanaka T."/>
        </authorList>
    </citation>
    <scope>MUTAGENESIS OF CYS-265 AND CYS-318</scope>
</reference>
<reference key="4">
    <citation type="journal article" date="1996" name="Appl. Environ. Microbiol.">
        <title>Analysis of interaction between the Arthrobacter sarcosine oxidase and the coenzyme flavin adenine dinucleotide by site-directed mutagenesis.</title>
        <authorList>
            <person name="Nishiya Y."/>
            <person name="Imanaka T."/>
        </authorList>
    </citation>
    <scope>MUTAGENESIS OF GLY-13; ALA-14; GLY-15; SER-16; MET-17; GLY-18 AND ASP-36</scope>
</reference>
<reference key="5">
    <citation type="journal article" date="2000" name="Protein Expr. Purif.">
        <title>A mutant sarcosine oxidase in which activity depends on flavin adenine dinucleotide.</title>
        <authorList>
            <person name="Nishiya Y."/>
        </authorList>
    </citation>
    <scope>MUTAGENESIS OF CYS-318</scope>
</reference>
<proteinExistence type="evidence at protein level"/>
<evidence type="ECO:0000255" key="1"/>
<evidence type="ECO:0000269" key="2">
    <source>
    </source>
</evidence>
<evidence type="ECO:0000269" key="3">
    <source>
    </source>
</evidence>
<evidence type="ECO:0000269" key="4">
    <source>
    </source>
</evidence>
<evidence type="ECO:0000269" key="5">
    <source ref="1"/>
</evidence>
<evidence type="ECO:0000305" key="6"/>
<keyword id="KW-0963">Cytoplasm</keyword>
<keyword id="KW-0903">Direct protein sequencing</keyword>
<keyword id="KW-0274">FAD</keyword>
<keyword id="KW-0285">Flavoprotein</keyword>
<keyword id="KW-0560">Oxidoreductase</keyword>
<dbReference type="EC" id="1.5.3.1"/>
<dbReference type="EMBL" id="D63413">
    <property type="protein sequence ID" value="BAA09716.1"/>
    <property type="molecule type" value="Genomic_DNA"/>
</dbReference>
<dbReference type="EMBL" id="AB007122">
    <property type="protein sequence ID" value="BAA25926.1"/>
    <property type="molecule type" value="Genomic_DNA"/>
</dbReference>
<dbReference type="PIR" id="T44248">
    <property type="entry name" value="T44248"/>
</dbReference>
<dbReference type="SMR" id="P40873"/>
<dbReference type="BioCyc" id="MetaCyc:MONOMER-11002"/>
<dbReference type="GO" id="GO:0005737">
    <property type="term" value="C:cytoplasm"/>
    <property type="evidence" value="ECO:0007669"/>
    <property type="project" value="UniProtKB-SubCell"/>
</dbReference>
<dbReference type="GO" id="GO:0050660">
    <property type="term" value="F:flavin adenine dinucleotide binding"/>
    <property type="evidence" value="ECO:0007669"/>
    <property type="project" value="InterPro"/>
</dbReference>
<dbReference type="GO" id="GO:0008115">
    <property type="term" value="F:sarcosine oxidase activity"/>
    <property type="evidence" value="ECO:0007669"/>
    <property type="project" value="UniProtKB-UniRule"/>
</dbReference>
<dbReference type="Gene3D" id="3.30.9.10">
    <property type="entry name" value="D-Amino Acid Oxidase, subunit A, domain 2"/>
    <property type="match status" value="1"/>
</dbReference>
<dbReference type="Gene3D" id="3.50.50.60">
    <property type="entry name" value="FAD/NAD(P)-binding domain"/>
    <property type="match status" value="1"/>
</dbReference>
<dbReference type="HAMAP" id="MF_00516">
    <property type="entry name" value="MSOX"/>
    <property type="match status" value="1"/>
</dbReference>
<dbReference type="InterPro" id="IPR006076">
    <property type="entry name" value="FAD-dep_OxRdtase"/>
</dbReference>
<dbReference type="InterPro" id="IPR036188">
    <property type="entry name" value="FAD/NAD-bd_sf"/>
</dbReference>
<dbReference type="InterPro" id="IPR045170">
    <property type="entry name" value="MTOX"/>
</dbReference>
<dbReference type="InterPro" id="IPR006281">
    <property type="entry name" value="SoxA_mon"/>
</dbReference>
<dbReference type="NCBIfam" id="NF008425">
    <property type="entry name" value="PRK11259.1"/>
    <property type="match status" value="1"/>
</dbReference>
<dbReference type="NCBIfam" id="TIGR01377">
    <property type="entry name" value="soxA_mon"/>
    <property type="match status" value="1"/>
</dbReference>
<dbReference type="PANTHER" id="PTHR10961:SF7">
    <property type="entry name" value="FAD DEPENDENT OXIDOREDUCTASE DOMAIN-CONTAINING PROTEIN"/>
    <property type="match status" value="1"/>
</dbReference>
<dbReference type="PANTHER" id="PTHR10961">
    <property type="entry name" value="PEROXISOMAL SARCOSINE OXIDASE"/>
    <property type="match status" value="1"/>
</dbReference>
<dbReference type="Pfam" id="PF01266">
    <property type="entry name" value="DAO"/>
    <property type="match status" value="1"/>
</dbReference>
<dbReference type="SUPFAM" id="SSF54373">
    <property type="entry name" value="FAD-linked reductases, C-terminal domain"/>
    <property type="match status" value="1"/>
</dbReference>
<dbReference type="SUPFAM" id="SSF51905">
    <property type="entry name" value="FAD/NAD(P)-binding domain"/>
    <property type="match status" value="1"/>
</dbReference>
<feature type="initiator methionine" description="Removed" evidence="5">
    <location>
        <position position="1"/>
    </location>
</feature>
<feature type="chain" id="PRO_0000213760" description="Monomeric sarcosine oxidase">
    <location>
        <begin position="2"/>
        <end position="389"/>
    </location>
</feature>
<feature type="binding site" evidence="1">
    <location>
        <begin position="8"/>
        <end position="38"/>
    </location>
    <ligand>
        <name>FAD</name>
        <dbReference type="ChEBI" id="CHEBI:57692"/>
    </ligand>
</feature>
<feature type="modified residue" description="S-8alpha-FAD cysteine" evidence="6">
    <location>
        <position position="318"/>
    </location>
</feature>
<feature type="mutagenesis site" description="Loss of activity." evidence="4">
    <original>G</original>
    <variation>A</variation>
    <location>
        <position position="13"/>
    </location>
</feature>
<feature type="mutagenesis site" description="Loss of activity." evidence="4">
    <original>A</original>
    <variation>D</variation>
    <variation>K</variation>
    <location>
        <position position="14"/>
    </location>
</feature>
<feature type="mutagenesis site" description="Decrease in activity." evidence="4">
    <original>A</original>
    <variation>I</variation>
    <variation>V</variation>
    <location>
        <position position="14"/>
    </location>
</feature>
<feature type="mutagenesis site" description="Weak activity." evidence="4">
    <original>A</original>
    <variation>L</variation>
    <variation>W</variation>
    <variation>Y</variation>
    <location>
        <position position="14"/>
    </location>
</feature>
<feature type="mutagenesis site" description="Loss of activity." evidence="4">
    <original>G</original>
    <variation>A</variation>
    <location>
        <position position="15"/>
    </location>
</feature>
<feature type="mutagenesis site" description="Weak activity. Loss of activity; when associated with G-17." evidence="4">
    <original>S</original>
    <variation>P</variation>
    <location>
        <position position="16"/>
    </location>
</feature>
<feature type="mutagenesis site" description="Weak activity. Loss of activity; when associated with P-16." evidence="4">
    <original>M</original>
    <variation>G</variation>
    <location>
        <position position="17"/>
    </location>
</feature>
<feature type="mutagenesis site" description="Weak activity." evidence="4">
    <original>G</original>
    <variation>A</variation>
    <location>
        <position position="18"/>
    </location>
</feature>
<feature type="mutagenesis site" description="Loss of activity." evidence="4">
    <original>D</original>
    <variation>A</variation>
    <location>
        <position position="36"/>
    </location>
</feature>
<feature type="mutagenesis site" description="Almost no change in activity." evidence="4">
    <original>D</original>
    <variation>E</variation>
    <location>
        <position position="36"/>
    </location>
</feature>
<feature type="mutagenesis site" description="100-fold decrease in activity." evidence="4">
    <original>D</original>
    <variation>N</variation>
    <location>
        <position position="36"/>
    </location>
</feature>
<feature type="mutagenesis site" description="Decrease in activity. Stabilizes SoxA against chemicals and metal ions." evidence="3">
    <original>C</original>
    <variation>A</variation>
    <variation>D</variation>
    <location>
        <position position="265"/>
    </location>
</feature>
<feature type="mutagenesis site" description="Almost no change in activity. Stabilizes SoxA against chemicals and metal ions." evidence="3">
    <original>C</original>
    <variation>R</variation>
    <variation>S</variation>
    <location>
        <position position="265"/>
    </location>
</feature>
<feature type="mutagenesis site" description="Weak activity." evidence="2 3">
    <original>C</original>
    <variation>S</variation>
    <location>
        <position position="318"/>
    </location>
</feature>
<feature type="sequence conflict" description="In Ref. 2; BAA09716/BAA25926." evidence="6" ref="2">
    <original>H</original>
    <variation>D</variation>
    <location>
        <position position="39"/>
    </location>
</feature>
<feature type="sequence conflict" description="In Ref. 2; BAA09716/BAA25926." evidence="6" ref="2">
    <original>D</original>
    <variation>A</variation>
    <location>
        <position position="316"/>
    </location>
</feature>
<organism>
    <name type="scientific">Arthrobacter sp. (strain TE1826)</name>
    <dbReference type="NCBI Taxonomy" id="68999"/>
    <lineage>
        <taxon>Bacteria</taxon>
        <taxon>Bacillati</taxon>
        <taxon>Actinomycetota</taxon>
        <taxon>Actinomycetes</taxon>
        <taxon>Micrococcales</taxon>
        <taxon>Micrococcaceae</taxon>
        <taxon>Arthrobacter</taxon>
    </lineage>
</organism>
<accession>P40873</accession>
<accession>O66180</accession>
<name>MSOX_ARTST</name>